<comment type="function">
    <text>Plays a dynamic role in flagellar motility. May be necessary for stable assembly of a subset of inner dynein arms or for the binding of these arms to the outer doublet microtubules of the axoneme.</text>
</comment>
<comment type="subcellular location">
    <subcellularLocation>
        <location>Cytoplasm</location>
        <location>Cytoskeleton</location>
        <location>Flagellum axoneme</location>
    </subcellularLocation>
    <text>Present along the entire length of the axoneme.</text>
</comment>
<comment type="similarity">
    <text evidence="3">Belongs to the inner dynein arm light chain family.</text>
</comment>
<sequence>MIPPLSSLVRYDNPVLVSTSKDKGKGAKGTPGKKGALPPVEQKPGLTQTEDILNSILPPREWTEDGQLWVQYVSSTPATRLDVINLQEKLDQQLQQRQARETGICPIREELYAQTFDELIRQVTINCAERGLLLLRVRDEMRMTIAAYQTLYESAVAFGIRKALQTEQGKSEMESRITQLEGDVKDLERQVQEWKFKCEAIEKRESERREVEAKKHKDEVAYLENYAKQLKQQLETFLVPAKKGAPGAPAAAT</sequence>
<evidence type="ECO:0000255" key="1"/>
<evidence type="ECO:0000256" key="2">
    <source>
        <dbReference type="SAM" id="MobiDB-lite"/>
    </source>
</evidence>
<evidence type="ECO:0000305" key="3"/>
<protein>
    <recommendedName>
        <fullName>28 kDa inner dynein arm light chain, axonemal</fullName>
    </recommendedName>
    <alternativeName>
        <fullName>p28</fullName>
    </alternativeName>
</protein>
<accession>Q39604</accession>
<accession>A8JDN3</accession>
<proteinExistence type="evidence at protein level"/>
<keyword id="KW-0002">3D-structure</keyword>
<keyword id="KW-0966">Cell projection</keyword>
<keyword id="KW-0969">Cilium</keyword>
<keyword id="KW-0970">Cilium biogenesis/degradation</keyword>
<keyword id="KW-0175">Coiled coil</keyword>
<keyword id="KW-0963">Cytoplasm</keyword>
<keyword id="KW-0206">Cytoskeleton</keyword>
<keyword id="KW-0903">Direct protein sequencing</keyword>
<keyword id="KW-0243">Dynein</keyword>
<keyword id="KW-0282">Flagellum</keyword>
<keyword id="KW-0505">Motor protein</keyword>
<feature type="chain" id="PRO_0000114681" description="28 kDa inner dynein arm light chain, axonemal">
    <location>
        <begin position="1"/>
        <end position="253"/>
    </location>
</feature>
<feature type="region of interest" description="Disordered" evidence="2">
    <location>
        <begin position="19"/>
        <end position="44"/>
    </location>
</feature>
<feature type="coiled-coil region" evidence="1">
    <location>
        <begin position="160"/>
        <end position="239"/>
    </location>
</feature>
<dbReference type="EMBL" id="Z48059">
    <property type="protein sequence ID" value="CAA88139.1"/>
    <property type="molecule type" value="Genomic_DNA"/>
</dbReference>
<dbReference type="EMBL" id="DS496163">
    <property type="protein sequence ID" value="EDO97971.1"/>
    <property type="molecule type" value="Genomic_DNA"/>
</dbReference>
<dbReference type="PIR" id="T08152">
    <property type="entry name" value="T08152"/>
</dbReference>
<dbReference type="RefSeq" id="XP_001700527.1">
    <property type="nucleotide sequence ID" value="XM_001700475.1"/>
</dbReference>
<dbReference type="PDB" id="7JU4">
    <property type="method" value="EM"/>
    <property type="resolution" value="3.40 A"/>
    <property type="chains" value="v/w=1-253"/>
</dbReference>
<dbReference type="PDB" id="8GLV">
    <property type="method" value="EM"/>
    <property type="resolution" value="3.10 A"/>
    <property type="chains" value="JE/JF/Kn/Ko/La/Lb=1-253"/>
</dbReference>
<dbReference type="PDBsum" id="7JU4"/>
<dbReference type="PDBsum" id="8GLV"/>
<dbReference type="EMDB" id="EMD-22481"/>
<dbReference type="EMDB" id="EMD-40220"/>
<dbReference type="SMR" id="Q39604"/>
<dbReference type="PaxDb" id="3055-EDO97971"/>
<dbReference type="eggNOG" id="KOG4001">
    <property type="taxonomic scope" value="Eukaryota"/>
</dbReference>
<dbReference type="HOGENOM" id="CLU_072652_0_0_1"/>
<dbReference type="GO" id="GO:0036156">
    <property type="term" value="C:inner dynein arm"/>
    <property type="evidence" value="ECO:0000314"/>
    <property type="project" value="GO_Central"/>
</dbReference>
<dbReference type="GO" id="GO:0031514">
    <property type="term" value="C:motile cilium"/>
    <property type="evidence" value="ECO:0007669"/>
    <property type="project" value="UniProtKB-KW"/>
</dbReference>
<dbReference type="GO" id="GO:0045504">
    <property type="term" value="F:dynein heavy chain binding"/>
    <property type="evidence" value="ECO:0000353"/>
    <property type="project" value="GO_Central"/>
</dbReference>
<dbReference type="GO" id="GO:0060294">
    <property type="term" value="P:cilium movement involved in cell motility"/>
    <property type="evidence" value="ECO:0000315"/>
    <property type="project" value="GO_Central"/>
</dbReference>
<dbReference type="GO" id="GO:0036159">
    <property type="term" value="P:inner dynein arm assembly"/>
    <property type="evidence" value="ECO:0000315"/>
    <property type="project" value="GO_Central"/>
</dbReference>
<dbReference type="InterPro" id="IPR019347">
    <property type="entry name" value="Axonemal_dynein_light_chain"/>
</dbReference>
<dbReference type="PANTHER" id="PTHR13183:SF0">
    <property type="entry name" value="AXONEMAL DYNEIN LIGHT INTERMEDIATE POLYPEPTIDE 1"/>
    <property type="match status" value="1"/>
</dbReference>
<dbReference type="PANTHER" id="PTHR13183">
    <property type="entry name" value="AXONEMAL INNER ARM DYNEIN LIGHT CHAIN 28"/>
    <property type="match status" value="1"/>
</dbReference>
<dbReference type="Pfam" id="PF10211">
    <property type="entry name" value="Ax_dynein_light"/>
    <property type="match status" value="1"/>
</dbReference>
<organism>
    <name type="scientific">Chlamydomonas reinhardtii</name>
    <name type="common">Chlamydomonas smithii</name>
    <dbReference type="NCBI Taxonomy" id="3055"/>
    <lineage>
        <taxon>Eukaryota</taxon>
        <taxon>Viridiplantae</taxon>
        <taxon>Chlorophyta</taxon>
        <taxon>core chlorophytes</taxon>
        <taxon>Chlorophyceae</taxon>
        <taxon>CS clade</taxon>
        <taxon>Chlamydomonadales</taxon>
        <taxon>Chlamydomonadaceae</taxon>
        <taxon>Chlamydomonas</taxon>
    </lineage>
</organism>
<reference key="1">
    <citation type="journal article" date="1995" name="Mol. Biol. Cell">
        <title>The light chain p28 associates with a subset of inner dynein arm heavy chains in Chlamydomonas axonemes.</title>
        <authorList>
            <person name="LeDizet M."/>
            <person name="Piperno G."/>
        </authorList>
    </citation>
    <scope>NUCLEOTIDE SEQUENCE [GENOMIC DNA]</scope>
    <scope>PROTEIN SEQUENCE OF 1-17 AND 175-193</scope>
</reference>
<reference key="2">
    <citation type="journal article" date="2007" name="Science">
        <title>The Chlamydomonas genome reveals the evolution of key animal and plant functions.</title>
        <authorList>
            <person name="Merchant S.S."/>
            <person name="Prochnik S.E."/>
            <person name="Vallon O."/>
            <person name="Harris E.H."/>
            <person name="Karpowicz S.J."/>
            <person name="Witman G.B."/>
            <person name="Terry A."/>
            <person name="Salamov A."/>
            <person name="Fritz-Laylin L.K."/>
            <person name="Marechal-Drouard L."/>
            <person name="Marshall W.F."/>
            <person name="Qu L.H."/>
            <person name="Nelson D.R."/>
            <person name="Sanderfoot A.A."/>
            <person name="Spalding M.H."/>
            <person name="Kapitonov V.V."/>
            <person name="Ren Q."/>
            <person name="Ferris P."/>
            <person name="Lindquist E."/>
            <person name="Shapiro H."/>
            <person name="Lucas S.M."/>
            <person name="Grimwood J."/>
            <person name="Schmutz J."/>
            <person name="Cardol P."/>
            <person name="Cerutti H."/>
            <person name="Chanfreau G."/>
            <person name="Chen C.L."/>
            <person name="Cognat V."/>
            <person name="Croft M.T."/>
            <person name="Dent R."/>
            <person name="Dutcher S."/>
            <person name="Fernandez E."/>
            <person name="Fukuzawa H."/>
            <person name="Gonzalez-Ballester D."/>
            <person name="Gonzalez-Halphen D."/>
            <person name="Hallmann A."/>
            <person name="Hanikenne M."/>
            <person name="Hippler M."/>
            <person name="Inwood W."/>
            <person name="Jabbari K."/>
            <person name="Kalanon M."/>
            <person name="Kuras R."/>
            <person name="Lefebvre P.A."/>
            <person name="Lemaire S.D."/>
            <person name="Lobanov A.V."/>
            <person name="Lohr M."/>
            <person name="Manuell A."/>
            <person name="Meier I."/>
            <person name="Mets L."/>
            <person name="Mittag M."/>
            <person name="Mittelmeier T."/>
            <person name="Moroney J.V."/>
            <person name="Moseley J."/>
            <person name="Napoli C."/>
            <person name="Nedelcu A.M."/>
            <person name="Niyogi K."/>
            <person name="Novoselov S.V."/>
            <person name="Paulsen I.T."/>
            <person name="Pazour G.J."/>
            <person name="Purton S."/>
            <person name="Ral J.P."/>
            <person name="Riano-Pachon D.M."/>
            <person name="Riekhof W."/>
            <person name="Rymarquis L."/>
            <person name="Schroda M."/>
            <person name="Stern D."/>
            <person name="Umen J."/>
            <person name="Willows R."/>
            <person name="Wilson N."/>
            <person name="Zimmer S.L."/>
            <person name="Allmer J."/>
            <person name="Balk J."/>
            <person name="Bisova K."/>
            <person name="Chen C.J."/>
            <person name="Elias M."/>
            <person name="Gendler K."/>
            <person name="Hauser C."/>
            <person name="Lamb M.R."/>
            <person name="Ledford H."/>
            <person name="Long J.C."/>
            <person name="Minagawa J."/>
            <person name="Page M.D."/>
            <person name="Pan J."/>
            <person name="Pootakham W."/>
            <person name="Roje S."/>
            <person name="Rose A."/>
            <person name="Stahlberg E."/>
            <person name="Terauchi A.M."/>
            <person name="Yang P."/>
            <person name="Ball S."/>
            <person name="Bowler C."/>
            <person name="Dieckmann C.L."/>
            <person name="Gladyshev V.N."/>
            <person name="Green P."/>
            <person name="Jorgensen R."/>
            <person name="Mayfield S."/>
            <person name="Mueller-Roeber B."/>
            <person name="Rajamani S."/>
            <person name="Sayre R.T."/>
            <person name="Brokstein P."/>
            <person name="Dubchak I."/>
            <person name="Goodstein D."/>
            <person name="Hornick L."/>
            <person name="Huang Y.W."/>
            <person name="Jhaveri J."/>
            <person name="Luo Y."/>
            <person name="Martinez D."/>
            <person name="Ngau W.C."/>
            <person name="Otillar B."/>
            <person name="Poliakov A."/>
            <person name="Porter A."/>
            <person name="Szajkowski L."/>
            <person name="Werner G."/>
            <person name="Zhou K."/>
            <person name="Grigoriev I.V."/>
            <person name="Rokhsar D.S."/>
            <person name="Grossman A.R."/>
        </authorList>
    </citation>
    <scope>NUCLEOTIDE SEQUENCE [LARGE SCALE GENOMIC DNA]</scope>
    <source>
        <strain>CC-503</strain>
        <strain>cw92</strain>
    </source>
</reference>
<reference key="3">
    <citation type="journal article" date="1995" name="Mol. Biol. Cell">
        <title>ida4-1, ida4-2, and ida4-3 are intron splicing mutations affecting the locus encoding p28, a light chain of Chlamydomonas axonemal inner dynein arms.</title>
        <authorList>
            <person name="LeDizet M."/>
            <person name="Piperno G."/>
        </authorList>
    </citation>
    <scope>MUTANTS IDA4</scope>
</reference>
<gene>
    <name type="primary">IDA4</name>
    <name type="synonym">P28</name>
    <name type="ORF">CHLREDRAFT_132451</name>
</gene>
<name>IDLC_CHLRE</name>